<feature type="chain" id="PRO_0000325614" description="Zinc finger protein 665">
    <location>
        <begin position="1"/>
        <end position="613"/>
    </location>
</feature>
<feature type="zinc finger region" description="C2H2-type 1" evidence="1">
    <location>
        <begin position="113"/>
        <end position="135"/>
    </location>
</feature>
<feature type="zinc finger region" description="C2H2-type 2" evidence="1">
    <location>
        <begin position="141"/>
        <end position="163"/>
    </location>
</feature>
<feature type="zinc finger region" description="C2H2-type 3" evidence="1">
    <location>
        <begin position="169"/>
        <end position="191"/>
    </location>
</feature>
<feature type="zinc finger region" description="C2H2-type 4" evidence="1">
    <location>
        <begin position="197"/>
        <end position="219"/>
    </location>
</feature>
<feature type="zinc finger region" description="C2H2-type 5" evidence="1">
    <location>
        <begin position="225"/>
        <end position="247"/>
    </location>
</feature>
<feature type="zinc finger region" description="C2H2-type 6" evidence="1">
    <location>
        <begin position="253"/>
        <end position="275"/>
    </location>
</feature>
<feature type="zinc finger region" description="C2H2-type 7" evidence="1">
    <location>
        <begin position="281"/>
        <end position="303"/>
    </location>
</feature>
<feature type="zinc finger region" description="C2H2-type 8" evidence="1">
    <location>
        <begin position="309"/>
        <end position="331"/>
    </location>
</feature>
<feature type="zinc finger region" description="C2H2-type 9" evidence="1">
    <location>
        <begin position="337"/>
        <end position="359"/>
    </location>
</feature>
<feature type="zinc finger region" description="C2H2-type 10" evidence="1">
    <location>
        <begin position="365"/>
        <end position="387"/>
    </location>
</feature>
<feature type="zinc finger region" description="C2H2-type 11" evidence="1">
    <location>
        <begin position="393"/>
        <end position="415"/>
    </location>
</feature>
<feature type="zinc finger region" description="C2H2-type 12" evidence="1">
    <location>
        <begin position="421"/>
        <end position="443"/>
    </location>
</feature>
<feature type="zinc finger region" description="C2H2-type 13" evidence="1">
    <location>
        <begin position="449"/>
        <end position="471"/>
    </location>
</feature>
<feature type="zinc finger region" description="C2H2-type 14" evidence="1">
    <location>
        <begin position="477"/>
        <end position="499"/>
    </location>
</feature>
<feature type="zinc finger region" description="C2H2-type 15" evidence="1">
    <location>
        <begin position="505"/>
        <end position="527"/>
    </location>
</feature>
<feature type="zinc finger region" description="C2H2-type 16" evidence="1">
    <location>
        <begin position="533"/>
        <end position="555"/>
    </location>
</feature>
<feature type="zinc finger region" description="C2H2-type 17" evidence="1">
    <location>
        <begin position="561"/>
        <end position="583"/>
    </location>
</feature>
<feature type="zinc finger region" description="C2H2-type 18" evidence="1">
    <location>
        <begin position="589"/>
        <end position="611"/>
    </location>
</feature>
<organism>
    <name type="scientific">Pongo abelii</name>
    <name type="common">Sumatran orangutan</name>
    <name type="synonym">Pongo pygmaeus abelii</name>
    <dbReference type="NCBI Taxonomy" id="9601"/>
    <lineage>
        <taxon>Eukaryota</taxon>
        <taxon>Metazoa</taxon>
        <taxon>Chordata</taxon>
        <taxon>Craniata</taxon>
        <taxon>Vertebrata</taxon>
        <taxon>Euteleostomi</taxon>
        <taxon>Mammalia</taxon>
        <taxon>Eutheria</taxon>
        <taxon>Euarchontoglires</taxon>
        <taxon>Primates</taxon>
        <taxon>Haplorrhini</taxon>
        <taxon>Catarrhini</taxon>
        <taxon>Hominidae</taxon>
        <taxon>Pongo</taxon>
    </lineage>
</organism>
<accession>Q5R8X1</accession>
<protein>
    <recommendedName>
        <fullName>Zinc finger protein 665</fullName>
    </recommendedName>
</protein>
<evidence type="ECO:0000255" key="1">
    <source>
        <dbReference type="PROSITE-ProRule" id="PRU00042"/>
    </source>
</evidence>
<evidence type="ECO:0000305" key="2"/>
<proteinExistence type="evidence at transcript level"/>
<name>ZN665_PONAB</name>
<dbReference type="EMBL" id="CR859627">
    <property type="protein sequence ID" value="CAH91789.1"/>
    <property type="molecule type" value="mRNA"/>
</dbReference>
<dbReference type="RefSeq" id="NP_001126039.1">
    <property type="nucleotide sequence ID" value="NM_001132567.2"/>
</dbReference>
<dbReference type="SMR" id="Q5R8X1"/>
<dbReference type="GeneID" id="100172988"/>
<dbReference type="KEGG" id="pon:100172988"/>
<dbReference type="CTD" id="79788"/>
<dbReference type="eggNOG" id="KOG1721">
    <property type="taxonomic scope" value="Eukaryota"/>
</dbReference>
<dbReference type="InParanoid" id="Q5R8X1"/>
<dbReference type="OrthoDB" id="9411774at2759"/>
<dbReference type="Proteomes" id="UP000001595">
    <property type="component" value="Unplaced"/>
</dbReference>
<dbReference type="GO" id="GO:0005634">
    <property type="term" value="C:nucleus"/>
    <property type="evidence" value="ECO:0007669"/>
    <property type="project" value="UniProtKB-SubCell"/>
</dbReference>
<dbReference type="GO" id="GO:0003677">
    <property type="term" value="F:DNA binding"/>
    <property type="evidence" value="ECO:0007669"/>
    <property type="project" value="UniProtKB-KW"/>
</dbReference>
<dbReference type="GO" id="GO:0008270">
    <property type="term" value="F:zinc ion binding"/>
    <property type="evidence" value="ECO:0007669"/>
    <property type="project" value="UniProtKB-KW"/>
</dbReference>
<dbReference type="GO" id="GO:0010468">
    <property type="term" value="P:regulation of gene expression"/>
    <property type="evidence" value="ECO:0007669"/>
    <property type="project" value="TreeGrafter"/>
</dbReference>
<dbReference type="FunFam" id="3.30.160.60:FF:004137">
    <property type="match status" value="6"/>
</dbReference>
<dbReference type="FunFam" id="3.30.160.60:FF:002278">
    <property type="entry name" value="Zinc finger protein 320"/>
    <property type="match status" value="5"/>
</dbReference>
<dbReference type="FunFam" id="3.30.160.60:FF:000133">
    <property type="entry name" value="Zinc finger protein 347"/>
    <property type="match status" value="4"/>
</dbReference>
<dbReference type="FunFam" id="3.30.160.60:FF:002402">
    <property type="entry name" value="Zinc finger protein 347"/>
    <property type="match status" value="1"/>
</dbReference>
<dbReference type="FunFam" id="3.30.160.60:FF:000016">
    <property type="entry name" value="zinc finger protein 37 homolog"/>
    <property type="match status" value="1"/>
</dbReference>
<dbReference type="FunFam" id="3.30.160.60:FF:002090">
    <property type="entry name" value="Zinc finger protein 473"/>
    <property type="match status" value="2"/>
</dbReference>
<dbReference type="FunFam" id="3.30.160.60:FF:000238">
    <property type="entry name" value="Zinc finger protein 485"/>
    <property type="match status" value="1"/>
</dbReference>
<dbReference type="FunFam" id="3.30.160.60:FF:002254">
    <property type="entry name" value="Zinc finger protein 540"/>
    <property type="match status" value="1"/>
</dbReference>
<dbReference type="FunFam" id="3.30.160.60:FF:000197">
    <property type="entry name" value="Zinc finger protein 606"/>
    <property type="match status" value="2"/>
</dbReference>
<dbReference type="FunFam" id="3.30.160.60:FF:001700">
    <property type="entry name" value="Zinc finger protein 677"/>
    <property type="match status" value="1"/>
</dbReference>
<dbReference type="Gene3D" id="3.30.160.60">
    <property type="entry name" value="Classic Zinc Finger"/>
    <property type="match status" value="18"/>
</dbReference>
<dbReference type="InterPro" id="IPR050331">
    <property type="entry name" value="Zinc_finger"/>
</dbReference>
<dbReference type="InterPro" id="IPR036236">
    <property type="entry name" value="Znf_C2H2_sf"/>
</dbReference>
<dbReference type="InterPro" id="IPR013087">
    <property type="entry name" value="Znf_C2H2_type"/>
</dbReference>
<dbReference type="PANTHER" id="PTHR16515">
    <property type="entry name" value="PR DOMAIN ZINC FINGER PROTEIN"/>
    <property type="match status" value="1"/>
</dbReference>
<dbReference type="PANTHER" id="PTHR16515:SF51">
    <property type="entry name" value="ZINC FINGER PROTEIN 833-RELATED"/>
    <property type="match status" value="1"/>
</dbReference>
<dbReference type="Pfam" id="PF00096">
    <property type="entry name" value="zf-C2H2"/>
    <property type="match status" value="18"/>
</dbReference>
<dbReference type="SMART" id="SM00355">
    <property type="entry name" value="ZnF_C2H2"/>
    <property type="match status" value="18"/>
</dbReference>
<dbReference type="SUPFAM" id="SSF57667">
    <property type="entry name" value="beta-beta-alpha zinc fingers"/>
    <property type="match status" value="10"/>
</dbReference>
<dbReference type="PROSITE" id="PS00028">
    <property type="entry name" value="ZINC_FINGER_C2H2_1"/>
    <property type="match status" value="18"/>
</dbReference>
<dbReference type="PROSITE" id="PS50157">
    <property type="entry name" value="ZINC_FINGER_C2H2_2"/>
    <property type="match status" value="18"/>
</dbReference>
<comment type="function">
    <text>May be involved in transcriptional regulation.</text>
</comment>
<comment type="subcellular location">
    <subcellularLocation>
        <location evidence="2">Nucleus</location>
    </subcellularLocation>
</comment>
<comment type="similarity">
    <text evidence="2">Belongs to the krueppel C2H2-type zinc-finger protein family.</text>
</comment>
<gene>
    <name type="primary">ZNF665</name>
</gene>
<reference key="1">
    <citation type="submission" date="2004-11" db="EMBL/GenBank/DDBJ databases">
        <authorList>
            <consortium name="The German cDNA consortium"/>
        </authorList>
    </citation>
    <scope>NUCLEOTIDE SEQUENCE [LARGE SCALE MRNA]</scope>
    <source>
        <tissue>Brain cortex</tissue>
    </source>
</reference>
<sequence>MGEAFYTVKLERLESHDTEGLSFQEVQKNTYDFECPWKDDEGNSKRVLTLQKENLPGRRDQRDRRAAGNRLIENQLGVSFQSHLPELQQFQGEGKIYEYNQVEKSLSNRGKHYKCDECGKVFNQNSRLTSHKRIHTGEKPYRCNECGKAFTVRSNLTIHQVIHTGEKPYKCNECGKVFSQPSNLAGHQRIHTGEKPYKCNECGKAFRAHSKLTTHQVIHTGEKPYKCNECGKCFTQNSHLASHRRIHTGEKPYKCNECGKAFSVRSSLTTHQTIHTGEKPYKCNECGKVFRHNSYLTKHRRVHTGEKPYKCNECGKAFSMHSNLTKHQIIHTGEKPFKCNECVKVFTQYSHLANHRRIHTGEKPYRCDECGKAFSVRSSLTTHQAIHTGEKPYKCNDCGKVFTQNSHLASHRGIHSGEKPYKCDECGKAFSQTSQLARHWRVHTGEKPYKCNECGKAFSVHSSLTTHQTIHTGQKPYKCNDCGKVFRHNSYLAVHQRIHTGEKPYKCNECGKAFSVHSNLATHQVIHTGEKPYKCNECGKVFTQNSHLANHRRIHTGEKPYRCNECGKAFSVRSTLTTHMAIHTGDKPYKCNECGKVFTQNSNLAKHRRIHSG</sequence>
<keyword id="KW-0238">DNA-binding</keyword>
<keyword id="KW-0479">Metal-binding</keyword>
<keyword id="KW-0539">Nucleus</keyword>
<keyword id="KW-1185">Reference proteome</keyword>
<keyword id="KW-0677">Repeat</keyword>
<keyword id="KW-0804">Transcription</keyword>
<keyword id="KW-0805">Transcription regulation</keyword>
<keyword id="KW-0862">Zinc</keyword>
<keyword id="KW-0863">Zinc-finger</keyword>